<gene>
    <name evidence="1" type="primary">yciU</name>
    <name type="ordered locus">SF1249</name>
    <name type="ordered locus">S1335</name>
</gene>
<proteinExistence type="inferred from homology"/>
<dbReference type="EMBL" id="AE005674">
    <property type="protein sequence ID" value="AAN42862.2"/>
    <property type="status" value="ALT_INIT"/>
    <property type="molecule type" value="Genomic_DNA"/>
</dbReference>
<dbReference type="EMBL" id="AE014073">
    <property type="protein sequence ID" value="AAP16747.1"/>
    <property type="status" value="ALT_INIT"/>
    <property type="molecule type" value="Genomic_DNA"/>
</dbReference>
<dbReference type="RefSeq" id="NP_707155.4">
    <property type="nucleotide sequence ID" value="NC_004337.2"/>
</dbReference>
<dbReference type="RefSeq" id="WP_000366963.1">
    <property type="nucleotide sequence ID" value="NZ_CP123365.1"/>
</dbReference>
<dbReference type="SMR" id="Q83LD1"/>
<dbReference type="STRING" id="198214.SF1249"/>
<dbReference type="PaxDb" id="198214-SF1249"/>
<dbReference type="GeneID" id="1024245"/>
<dbReference type="KEGG" id="sfl:SF1249"/>
<dbReference type="KEGG" id="sfx:S1335"/>
<dbReference type="PATRIC" id="fig|198214.7.peg.1469"/>
<dbReference type="HOGENOM" id="CLU_143392_0_0_6"/>
<dbReference type="Proteomes" id="UP000001006">
    <property type="component" value="Chromosome"/>
</dbReference>
<dbReference type="Proteomes" id="UP000002673">
    <property type="component" value="Chromosome"/>
</dbReference>
<dbReference type="Gene3D" id="3.10.450.140">
    <property type="entry name" value="dsDNA mimic, putative"/>
    <property type="match status" value="1"/>
</dbReference>
<dbReference type="HAMAP" id="MF_00680">
    <property type="entry name" value="Put_dsDNA_mimic"/>
    <property type="match status" value="1"/>
</dbReference>
<dbReference type="InterPro" id="IPR007376">
    <property type="entry name" value="dsDNA_mimic_put"/>
</dbReference>
<dbReference type="InterPro" id="IPR036763">
    <property type="entry name" value="Put_dsDNA_mimic_sf"/>
</dbReference>
<dbReference type="NCBIfam" id="NF003469">
    <property type="entry name" value="PRK05094.1"/>
    <property type="match status" value="1"/>
</dbReference>
<dbReference type="Pfam" id="PF04269">
    <property type="entry name" value="DUF440"/>
    <property type="match status" value="1"/>
</dbReference>
<dbReference type="PIRSF" id="PIRSF004916">
    <property type="entry name" value="UCP004916"/>
    <property type="match status" value="1"/>
</dbReference>
<dbReference type="SUPFAM" id="SSF102816">
    <property type="entry name" value="Putative dsDNA mimic"/>
    <property type="match status" value="1"/>
</dbReference>
<name>YCIU_SHIFL</name>
<accession>Q83LD1</accession>
<reference key="1">
    <citation type="journal article" date="2002" name="Nucleic Acids Res.">
        <title>Genome sequence of Shigella flexneri 2a: insights into pathogenicity through comparison with genomes of Escherichia coli K12 and O157.</title>
        <authorList>
            <person name="Jin Q."/>
            <person name="Yuan Z."/>
            <person name="Xu J."/>
            <person name="Wang Y."/>
            <person name="Shen Y."/>
            <person name="Lu W."/>
            <person name="Wang J."/>
            <person name="Liu H."/>
            <person name="Yang J."/>
            <person name="Yang F."/>
            <person name="Zhang X."/>
            <person name="Zhang J."/>
            <person name="Yang G."/>
            <person name="Wu H."/>
            <person name="Qu D."/>
            <person name="Dong J."/>
            <person name="Sun L."/>
            <person name="Xue Y."/>
            <person name="Zhao A."/>
            <person name="Gao Y."/>
            <person name="Zhu J."/>
            <person name="Kan B."/>
            <person name="Ding K."/>
            <person name="Chen S."/>
            <person name="Cheng H."/>
            <person name="Yao Z."/>
            <person name="He B."/>
            <person name="Chen R."/>
            <person name="Ma D."/>
            <person name="Qiang B."/>
            <person name="Wen Y."/>
            <person name="Hou Y."/>
            <person name="Yu J."/>
        </authorList>
    </citation>
    <scope>NUCLEOTIDE SEQUENCE [LARGE SCALE GENOMIC DNA]</scope>
    <source>
        <strain>301 / Serotype 2a</strain>
    </source>
</reference>
<reference key="2">
    <citation type="journal article" date="2003" name="Infect. Immun.">
        <title>Complete genome sequence and comparative genomics of Shigella flexneri serotype 2a strain 2457T.</title>
        <authorList>
            <person name="Wei J."/>
            <person name="Goldberg M.B."/>
            <person name="Burland V."/>
            <person name="Venkatesan M.M."/>
            <person name="Deng W."/>
            <person name="Fournier G."/>
            <person name="Mayhew G.F."/>
            <person name="Plunkett G. III"/>
            <person name="Rose D.J."/>
            <person name="Darling A."/>
            <person name="Mau B."/>
            <person name="Perna N.T."/>
            <person name="Payne S.M."/>
            <person name="Runyen-Janecky L.J."/>
            <person name="Zhou S."/>
            <person name="Schwartz D.C."/>
            <person name="Blattner F.R."/>
        </authorList>
    </citation>
    <scope>NUCLEOTIDE SEQUENCE [LARGE SCALE GENOMIC DNA]</scope>
    <source>
        <strain>ATCC 700930 / 2457T / Serotype 2a</strain>
    </source>
</reference>
<protein>
    <recommendedName>
        <fullName evidence="1">Putative double-stranded DNA mimic protein YciU</fullName>
    </recommendedName>
</protein>
<organism>
    <name type="scientific">Shigella flexneri</name>
    <dbReference type="NCBI Taxonomy" id="623"/>
    <lineage>
        <taxon>Bacteria</taxon>
        <taxon>Pseudomonadati</taxon>
        <taxon>Pseudomonadota</taxon>
        <taxon>Gammaproteobacteria</taxon>
        <taxon>Enterobacterales</taxon>
        <taxon>Enterobacteriaceae</taxon>
        <taxon>Shigella</taxon>
    </lineage>
</organism>
<evidence type="ECO:0000255" key="1">
    <source>
        <dbReference type="HAMAP-Rule" id="MF_00680"/>
    </source>
</evidence>
<evidence type="ECO:0000305" key="2"/>
<feature type="chain" id="PRO_0000072784" description="Putative double-stranded DNA mimic protein YciU">
    <location>
        <begin position="1"/>
        <end position="109"/>
    </location>
</feature>
<feature type="sequence conflict" description="In Ref. 2; AAP16747." evidence="2" ref="2">
    <original>T</original>
    <variation>A</variation>
    <location>
        <position position="78"/>
    </location>
</feature>
<sequence>MDMDLNNRLTEDETLEQAYDIFLELAADNLDPADVLLFNLQFEERGGAELFDPAEDWQEHVDFDLNPDFFAEVVIGLTDSEDGEISDVFARILLCREKDHKLCHIIWRE</sequence>
<keyword id="KW-1185">Reference proteome</keyword>
<comment type="function">
    <text evidence="1">May act as a double-stranded DNA (dsDNA) mimic. Probably regulates the activity of a dsDNA-binding protein.</text>
</comment>
<comment type="similarity">
    <text evidence="1">Belongs to the putative dsDNA mimic protein family.</text>
</comment>
<comment type="sequence caution" evidence="2">
    <conflict type="erroneous initiation">
        <sequence resource="EMBL-CDS" id="AAN42862"/>
    </conflict>
    <text>Extended N-terminus.</text>
</comment>
<comment type="sequence caution" evidence="2">
    <conflict type="erroneous initiation">
        <sequence resource="EMBL-CDS" id="AAP16747"/>
    </conflict>
    <text>Extended N-terminus.</text>
</comment>